<comment type="cofactor">
    <cofactor evidence="1">
        <name>FMN</name>
        <dbReference type="ChEBI" id="CHEBI:58210"/>
    </cofactor>
</comment>
<comment type="similarity">
    <text evidence="2">Belongs to the flavoredoxin family.</text>
</comment>
<organism>
    <name type="scientific">Bacillus subtilis (strain 168)</name>
    <dbReference type="NCBI Taxonomy" id="224308"/>
    <lineage>
        <taxon>Bacteria</taxon>
        <taxon>Bacillati</taxon>
        <taxon>Bacillota</taxon>
        <taxon>Bacilli</taxon>
        <taxon>Bacillales</taxon>
        <taxon>Bacillaceae</taxon>
        <taxon>Bacillus</taxon>
    </lineage>
</organism>
<proteinExistence type="inferred from homology"/>
<evidence type="ECO:0000250" key="1"/>
<evidence type="ECO:0000305" key="2"/>
<feature type="chain" id="PRO_0000085523" description="Uncharacterized protein YwrF">
    <location>
        <begin position="1"/>
        <end position="205"/>
    </location>
</feature>
<name>YWRF_BACSU</name>
<gene>
    <name type="primary">ywrF</name>
    <name type="ordered locus">BSU36080</name>
</gene>
<dbReference type="EMBL" id="Z93767">
    <property type="protein sequence ID" value="CAB07792.1"/>
    <property type="molecule type" value="Genomic_DNA"/>
</dbReference>
<dbReference type="EMBL" id="AL009126">
    <property type="protein sequence ID" value="CAB15625.1"/>
    <property type="molecule type" value="Genomic_DNA"/>
</dbReference>
<dbReference type="PIR" id="H70068">
    <property type="entry name" value="H70068"/>
</dbReference>
<dbReference type="RefSeq" id="NP_391489.1">
    <property type="nucleotide sequence ID" value="NC_000964.3"/>
</dbReference>
<dbReference type="RefSeq" id="WP_003227852.1">
    <property type="nucleotide sequence ID" value="NZ_OZ025638.1"/>
</dbReference>
<dbReference type="SMR" id="O05220"/>
<dbReference type="FunCoup" id="O05220">
    <property type="interactions" value="41"/>
</dbReference>
<dbReference type="STRING" id="224308.BSU36080"/>
<dbReference type="PaxDb" id="224308-BSU36080"/>
<dbReference type="EnsemblBacteria" id="CAB15625">
    <property type="protein sequence ID" value="CAB15625"/>
    <property type="gene ID" value="BSU_36080"/>
</dbReference>
<dbReference type="GeneID" id="936871"/>
<dbReference type="KEGG" id="bsu:BSU36080"/>
<dbReference type="PATRIC" id="fig|224308.179.peg.3905"/>
<dbReference type="eggNOG" id="COG1853">
    <property type="taxonomic scope" value="Bacteria"/>
</dbReference>
<dbReference type="InParanoid" id="O05220"/>
<dbReference type="OrthoDB" id="9794638at2"/>
<dbReference type="PhylomeDB" id="O05220"/>
<dbReference type="BioCyc" id="BSUB:BSU36080-MONOMER"/>
<dbReference type="Proteomes" id="UP000001570">
    <property type="component" value="Chromosome"/>
</dbReference>
<dbReference type="GO" id="GO:0010181">
    <property type="term" value="F:FMN binding"/>
    <property type="evidence" value="ECO:0007669"/>
    <property type="project" value="InterPro"/>
</dbReference>
<dbReference type="GO" id="GO:0016646">
    <property type="term" value="F:oxidoreductase activity, acting on the CH-NH group of donors, NAD or NADP as acceptor"/>
    <property type="evidence" value="ECO:0007669"/>
    <property type="project" value="UniProtKB-ARBA"/>
</dbReference>
<dbReference type="Gene3D" id="2.30.110.10">
    <property type="entry name" value="Electron Transport, Fmn-binding Protein, Chain A"/>
    <property type="match status" value="1"/>
</dbReference>
<dbReference type="InterPro" id="IPR002563">
    <property type="entry name" value="Flavin_Rdtase-like_dom"/>
</dbReference>
<dbReference type="InterPro" id="IPR012349">
    <property type="entry name" value="Split_barrel_FMN-bd"/>
</dbReference>
<dbReference type="PANTHER" id="PTHR33798:SF5">
    <property type="entry name" value="FLAVIN REDUCTASE LIKE DOMAIN-CONTAINING PROTEIN"/>
    <property type="match status" value="1"/>
</dbReference>
<dbReference type="PANTHER" id="PTHR33798">
    <property type="entry name" value="FLAVOPROTEIN OXYGENASE"/>
    <property type="match status" value="1"/>
</dbReference>
<dbReference type="Pfam" id="PF01613">
    <property type="entry name" value="Flavin_Reduct"/>
    <property type="match status" value="1"/>
</dbReference>
<dbReference type="SMART" id="SM00903">
    <property type="entry name" value="Flavin_Reduct"/>
    <property type="match status" value="1"/>
</dbReference>
<dbReference type="SUPFAM" id="SSF50475">
    <property type="entry name" value="FMN-binding split barrel"/>
    <property type="match status" value="1"/>
</dbReference>
<reference key="1">
    <citation type="journal article" date="1997" name="Microbiology">
        <title>The Bacillus subtilis genome from gerBC (311 degrees) to licR (334 degrees).</title>
        <authorList>
            <person name="Presecan E."/>
            <person name="Moszer I."/>
            <person name="Boursier L."/>
            <person name="Cruz Ramos H."/>
            <person name="De La Fuente V."/>
            <person name="Hullo M.-F."/>
            <person name="Lelong C."/>
            <person name="Schleich S."/>
            <person name="Sekowska A."/>
            <person name="Song B.H."/>
            <person name="Villani G."/>
            <person name="Kunst F."/>
            <person name="Danchin A."/>
            <person name="Glaser P."/>
        </authorList>
    </citation>
    <scope>NUCLEOTIDE SEQUENCE [GENOMIC DNA]</scope>
    <source>
        <strain>168</strain>
    </source>
</reference>
<reference key="2">
    <citation type="journal article" date="1997" name="Nature">
        <title>The complete genome sequence of the Gram-positive bacterium Bacillus subtilis.</title>
        <authorList>
            <person name="Kunst F."/>
            <person name="Ogasawara N."/>
            <person name="Moszer I."/>
            <person name="Albertini A.M."/>
            <person name="Alloni G."/>
            <person name="Azevedo V."/>
            <person name="Bertero M.G."/>
            <person name="Bessieres P."/>
            <person name="Bolotin A."/>
            <person name="Borchert S."/>
            <person name="Borriss R."/>
            <person name="Boursier L."/>
            <person name="Brans A."/>
            <person name="Braun M."/>
            <person name="Brignell S.C."/>
            <person name="Bron S."/>
            <person name="Brouillet S."/>
            <person name="Bruschi C.V."/>
            <person name="Caldwell B."/>
            <person name="Capuano V."/>
            <person name="Carter N.M."/>
            <person name="Choi S.-K."/>
            <person name="Codani J.-J."/>
            <person name="Connerton I.F."/>
            <person name="Cummings N.J."/>
            <person name="Daniel R.A."/>
            <person name="Denizot F."/>
            <person name="Devine K.M."/>
            <person name="Duesterhoeft A."/>
            <person name="Ehrlich S.D."/>
            <person name="Emmerson P.T."/>
            <person name="Entian K.-D."/>
            <person name="Errington J."/>
            <person name="Fabret C."/>
            <person name="Ferrari E."/>
            <person name="Foulger D."/>
            <person name="Fritz C."/>
            <person name="Fujita M."/>
            <person name="Fujita Y."/>
            <person name="Fuma S."/>
            <person name="Galizzi A."/>
            <person name="Galleron N."/>
            <person name="Ghim S.-Y."/>
            <person name="Glaser P."/>
            <person name="Goffeau A."/>
            <person name="Golightly E.J."/>
            <person name="Grandi G."/>
            <person name="Guiseppi G."/>
            <person name="Guy B.J."/>
            <person name="Haga K."/>
            <person name="Haiech J."/>
            <person name="Harwood C.R."/>
            <person name="Henaut A."/>
            <person name="Hilbert H."/>
            <person name="Holsappel S."/>
            <person name="Hosono S."/>
            <person name="Hullo M.-F."/>
            <person name="Itaya M."/>
            <person name="Jones L.-M."/>
            <person name="Joris B."/>
            <person name="Karamata D."/>
            <person name="Kasahara Y."/>
            <person name="Klaerr-Blanchard M."/>
            <person name="Klein C."/>
            <person name="Kobayashi Y."/>
            <person name="Koetter P."/>
            <person name="Koningstein G."/>
            <person name="Krogh S."/>
            <person name="Kumano M."/>
            <person name="Kurita K."/>
            <person name="Lapidus A."/>
            <person name="Lardinois S."/>
            <person name="Lauber J."/>
            <person name="Lazarevic V."/>
            <person name="Lee S.-M."/>
            <person name="Levine A."/>
            <person name="Liu H."/>
            <person name="Masuda S."/>
            <person name="Mauel C."/>
            <person name="Medigue C."/>
            <person name="Medina N."/>
            <person name="Mellado R.P."/>
            <person name="Mizuno M."/>
            <person name="Moestl D."/>
            <person name="Nakai S."/>
            <person name="Noback M."/>
            <person name="Noone D."/>
            <person name="O'Reilly M."/>
            <person name="Ogawa K."/>
            <person name="Ogiwara A."/>
            <person name="Oudega B."/>
            <person name="Park S.-H."/>
            <person name="Parro V."/>
            <person name="Pohl T.M."/>
            <person name="Portetelle D."/>
            <person name="Porwollik S."/>
            <person name="Prescott A.M."/>
            <person name="Presecan E."/>
            <person name="Pujic P."/>
            <person name="Purnelle B."/>
            <person name="Rapoport G."/>
            <person name="Rey M."/>
            <person name="Reynolds S."/>
            <person name="Rieger M."/>
            <person name="Rivolta C."/>
            <person name="Rocha E."/>
            <person name="Roche B."/>
            <person name="Rose M."/>
            <person name="Sadaie Y."/>
            <person name="Sato T."/>
            <person name="Scanlan E."/>
            <person name="Schleich S."/>
            <person name="Schroeter R."/>
            <person name="Scoffone F."/>
            <person name="Sekiguchi J."/>
            <person name="Sekowska A."/>
            <person name="Seror S.J."/>
            <person name="Serror P."/>
            <person name="Shin B.-S."/>
            <person name="Soldo B."/>
            <person name="Sorokin A."/>
            <person name="Tacconi E."/>
            <person name="Takagi T."/>
            <person name="Takahashi H."/>
            <person name="Takemaru K."/>
            <person name="Takeuchi M."/>
            <person name="Tamakoshi A."/>
            <person name="Tanaka T."/>
            <person name="Terpstra P."/>
            <person name="Tognoni A."/>
            <person name="Tosato V."/>
            <person name="Uchiyama S."/>
            <person name="Vandenbol M."/>
            <person name="Vannier F."/>
            <person name="Vassarotti A."/>
            <person name="Viari A."/>
            <person name="Wambutt R."/>
            <person name="Wedler E."/>
            <person name="Wedler H."/>
            <person name="Weitzenegger T."/>
            <person name="Winters P."/>
            <person name="Wipat A."/>
            <person name="Yamamoto H."/>
            <person name="Yamane K."/>
            <person name="Yasumoto K."/>
            <person name="Yata K."/>
            <person name="Yoshida K."/>
            <person name="Yoshikawa H.-F."/>
            <person name="Zumstein E."/>
            <person name="Yoshikawa H."/>
            <person name="Danchin A."/>
        </authorList>
    </citation>
    <scope>NUCLEOTIDE SEQUENCE [LARGE SCALE GENOMIC DNA]</scope>
    <source>
        <strain>168</strain>
    </source>
</reference>
<keyword id="KW-0285">Flavoprotein</keyword>
<keyword id="KW-0288">FMN</keyword>
<keyword id="KW-1185">Reference proteome</keyword>
<sequence>MYIFQADQLSAKDTYKLLSGTVIPRPIAFVTTLSSGGAVNAAPFSFYNVVSSDPPLLSISVNRTEGRQKDTARNAVENGEFVVHVSDEAIIEDINETAASLRPDESELTRTSLHPVESKAVSVPGIKEARVRFECKLERHITFDNDQGITTADLLIGRVVCFHLDEKVYDAEKGYILTDELKPASRLAGNHYAKLGEEFTLIRPS</sequence>
<accession>O05220</accession>
<protein>
    <recommendedName>
        <fullName>Uncharacterized protein YwrF</fullName>
    </recommendedName>
</protein>